<keyword id="KW-0325">Glycoprotein</keyword>
<keyword id="KW-0494">Milk protein</keyword>
<keyword id="KW-0597">Phosphoprotein</keyword>
<keyword id="KW-0964">Secreted</keyword>
<feature type="chain" id="PRO_0000144109" description="Kappa-casein">
    <location>
        <begin position="1" status="less than"/>
        <end position="135"/>
    </location>
</feature>
<feature type="site" description="Cleavage; by chymosin/rennin" evidence="1">
    <location>
        <begin position="70"/>
        <end position="71"/>
    </location>
</feature>
<feature type="modified residue" description="Phosphoserine; alternate" evidence="2">
    <location>
        <position position="114"/>
    </location>
</feature>
<feature type="modified residue" description="Phosphoserine" evidence="3">
    <location>
        <position position="132"/>
    </location>
</feature>
<feature type="glycosylation site" description="O-linked (GalNAc...) threonine" evidence="2">
    <location>
        <position position="96"/>
    </location>
</feature>
<feature type="glycosylation site" description="O-linked (GalNAc...) serine; alternate" evidence="2">
    <location>
        <position position="114"/>
    </location>
</feature>
<feature type="glycosylation site" description="O-linked (GalNAc...) threonine" evidence="2">
    <location>
        <position position="131"/>
    </location>
</feature>
<feature type="non-terminal residue">
    <location>
        <position position="1"/>
    </location>
</feature>
<comment type="function">
    <text>Kappa-casein stabilizes micelle formation, preventing casein precipitation in milk.</text>
</comment>
<comment type="subcellular location">
    <subcellularLocation>
        <location>Secreted</location>
    </subcellularLocation>
</comment>
<comment type="tissue specificity">
    <text>Mammary gland specific. Secreted in milk.</text>
</comment>
<comment type="similarity">
    <text evidence="4">Belongs to the kappa-casein family.</text>
</comment>
<gene>
    <name type="primary">CSN3</name>
    <name type="synonym">CSN10</name>
    <name type="synonym">CSNK</name>
</gene>
<organism>
    <name type="scientific">Equus grevyi</name>
    <name type="common">Grevy's zebra</name>
    <dbReference type="NCBI Taxonomy" id="9792"/>
    <lineage>
        <taxon>Eukaryota</taxon>
        <taxon>Metazoa</taxon>
        <taxon>Chordata</taxon>
        <taxon>Craniata</taxon>
        <taxon>Vertebrata</taxon>
        <taxon>Euteleostomi</taxon>
        <taxon>Mammalia</taxon>
        <taxon>Eutheria</taxon>
        <taxon>Laurasiatheria</taxon>
        <taxon>Perissodactyla</taxon>
        <taxon>Equidae</taxon>
        <taxon>Equus</taxon>
    </lineage>
</organism>
<name>CASK_EQUGR</name>
<evidence type="ECO:0000250" key="1"/>
<evidence type="ECO:0000250" key="2">
    <source>
        <dbReference type="UniProtKB" id="P02668"/>
    </source>
</evidence>
<evidence type="ECO:0000250" key="3">
    <source>
        <dbReference type="UniProtKB" id="P02670"/>
    </source>
</evidence>
<evidence type="ECO:0000305" key="4"/>
<sequence>IYYVLNSSPRYEPIYYQHRLAVLINNQHMPYQYYARPAAVRPHVQIPQWQVLPNIYPSTVVRHPRPHPSFIAIPPKXLQEKTVIPKINTIATVEPTPIPTPEPTVNNAVIPDASSEFIIASTPETTTVPVTSPVV</sequence>
<proteinExistence type="evidence at transcript level"/>
<protein>
    <recommendedName>
        <fullName>Kappa-casein</fullName>
    </recommendedName>
</protein>
<accession>Q28400</accession>
<dbReference type="EMBL" id="U53893">
    <property type="protein sequence ID" value="AAB08409.1"/>
    <property type="molecule type" value="Genomic_DNA"/>
</dbReference>
<dbReference type="GlyCosmos" id="Q28400">
    <property type="glycosylation" value="3 sites, No reported glycans"/>
</dbReference>
<dbReference type="GO" id="GO:0005615">
    <property type="term" value="C:extracellular space"/>
    <property type="evidence" value="ECO:0007669"/>
    <property type="project" value="TreeGrafter"/>
</dbReference>
<dbReference type="GO" id="GO:0007595">
    <property type="term" value="P:lactation"/>
    <property type="evidence" value="ECO:0007669"/>
    <property type="project" value="TreeGrafter"/>
</dbReference>
<dbReference type="GO" id="GO:0050821">
    <property type="term" value="P:protein stabilization"/>
    <property type="evidence" value="ECO:0007669"/>
    <property type="project" value="TreeGrafter"/>
</dbReference>
<dbReference type="InterPro" id="IPR000117">
    <property type="entry name" value="Casein_kappa"/>
</dbReference>
<dbReference type="PANTHER" id="PTHR11470">
    <property type="entry name" value="KAPPA CASEIN"/>
    <property type="match status" value="1"/>
</dbReference>
<dbReference type="PANTHER" id="PTHR11470:SF2">
    <property type="entry name" value="KAPPA-CASEIN"/>
    <property type="match status" value="1"/>
</dbReference>
<dbReference type="Pfam" id="PF00997">
    <property type="entry name" value="Casein_kappa"/>
    <property type="match status" value="1"/>
</dbReference>
<reference key="1">
    <citation type="journal article" date="1996" name="Mol. Biol. Evol.">
        <title>Evidence from milk casein genes that cetaceans are close relatives of hippopotamid artiodactyls.</title>
        <authorList>
            <person name="Gatesy J."/>
            <person name="Hayashi C."/>
            <person name="Cronin M.A."/>
            <person name="Arctander P."/>
        </authorList>
    </citation>
    <scope>NUCLEOTIDE SEQUENCE [GENOMIC DNA]</scope>
</reference>